<accession>C3NE98</accession>
<evidence type="ECO:0000255" key="1">
    <source>
        <dbReference type="HAMAP-Rule" id="MF_02113"/>
    </source>
</evidence>
<reference key="1">
    <citation type="journal article" date="2009" name="Proc. Natl. Acad. Sci. U.S.A.">
        <title>Biogeography of the Sulfolobus islandicus pan-genome.</title>
        <authorList>
            <person name="Reno M.L."/>
            <person name="Held N.L."/>
            <person name="Fields C.J."/>
            <person name="Burke P.V."/>
            <person name="Whitaker R.J."/>
        </authorList>
    </citation>
    <scope>NUCLEOTIDE SEQUENCE [LARGE SCALE GENOMIC DNA]</scope>
    <source>
        <strain>Y.G.57.14 / Yellowstone #1</strain>
    </source>
</reference>
<dbReference type="EC" id="3.4.25.1" evidence="1"/>
<dbReference type="EMBL" id="CP001403">
    <property type="protein sequence ID" value="ACP45637.1"/>
    <property type="molecule type" value="Genomic_DNA"/>
</dbReference>
<dbReference type="SMR" id="C3NE98"/>
<dbReference type="MEROPS" id="T01.002"/>
<dbReference type="KEGG" id="siy:YG5714_1370"/>
<dbReference type="HOGENOM" id="CLU_035750_7_2_2"/>
<dbReference type="Proteomes" id="UP000002308">
    <property type="component" value="Chromosome"/>
</dbReference>
<dbReference type="GO" id="GO:0005737">
    <property type="term" value="C:cytoplasm"/>
    <property type="evidence" value="ECO:0007669"/>
    <property type="project" value="UniProtKB-SubCell"/>
</dbReference>
<dbReference type="GO" id="GO:0019774">
    <property type="term" value="C:proteasome core complex, beta-subunit complex"/>
    <property type="evidence" value="ECO:0007669"/>
    <property type="project" value="UniProtKB-UniRule"/>
</dbReference>
<dbReference type="GO" id="GO:0004298">
    <property type="term" value="F:threonine-type endopeptidase activity"/>
    <property type="evidence" value="ECO:0007669"/>
    <property type="project" value="UniProtKB-UniRule"/>
</dbReference>
<dbReference type="GO" id="GO:0010498">
    <property type="term" value="P:proteasomal protein catabolic process"/>
    <property type="evidence" value="ECO:0007669"/>
    <property type="project" value="UniProtKB-UniRule"/>
</dbReference>
<dbReference type="CDD" id="cd03764">
    <property type="entry name" value="proteasome_beta_archeal"/>
    <property type="match status" value="1"/>
</dbReference>
<dbReference type="FunFam" id="3.60.20.10:FF:000049">
    <property type="entry name" value="Proteasome subunit beta"/>
    <property type="match status" value="1"/>
</dbReference>
<dbReference type="Gene3D" id="3.60.20.10">
    <property type="entry name" value="Glutamine Phosphoribosylpyrophosphate, subunit 1, domain 1"/>
    <property type="match status" value="1"/>
</dbReference>
<dbReference type="HAMAP" id="MF_02113_A">
    <property type="entry name" value="Proteasome_B_A"/>
    <property type="match status" value="1"/>
</dbReference>
<dbReference type="InterPro" id="IPR029055">
    <property type="entry name" value="Ntn_hydrolases_N"/>
</dbReference>
<dbReference type="InterPro" id="IPR019983">
    <property type="entry name" value="Pept_T1A_Psome_bsu_arc"/>
</dbReference>
<dbReference type="InterPro" id="IPR000243">
    <property type="entry name" value="Pept_T1A_subB"/>
</dbReference>
<dbReference type="InterPro" id="IPR016050">
    <property type="entry name" value="Proteasome_bsu_CS"/>
</dbReference>
<dbReference type="InterPro" id="IPR001353">
    <property type="entry name" value="Proteasome_sua/b"/>
</dbReference>
<dbReference type="InterPro" id="IPR023333">
    <property type="entry name" value="Proteasome_suB-type"/>
</dbReference>
<dbReference type="NCBIfam" id="TIGR03634">
    <property type="entry name" value="arc_protsome_B"/>
    <property type="match status" value="1"/>
</dbReference>
<dbReference type="PANTHER" id="PTHR32194:SF0">
    <property type="entry name" value="ATP-DEPENDENT PROTEASE SUBUNIT HSLV"/>
    <property type="match status" value="1"/>
</dbReference>
<dbReference type="PANTHER" id="PTHR32194">
    <property type="entry name" value="METALLOPROTEASE TLDD"/>
    <property type="match status" value="1"/>
</dbReference>
<dbReference type="Pfam" id="PF00227">
    <property type="entry name" value="Proteasome"/>
    <property type="match status" value="1"/>
</dbReference>
<dbReference type="PRINTS" id="PR00141">
    <property type="entry name" value="PROTEASOME"/>
</dbReference>
<dbReference type="SUPFAM" id="SSF56235">
    <property type="entry name" value="N-terminal nucleophile aminohydrolases (Ntn hydrolases)"/>
    <property type="match status" value="1"/>
</dbReference>
<dbReference type="PROSITE" id="PS00854">
    <property type="entry name" value="PROTEASOME_BETA_1"/>
    <property type="match status" value="1"/>
</dbReference>
<dbReference type="PROSITE" id="PS51476">
    <property type="entry name" value="PROTEASOME_BETA_2"/>
    <property type="match status" value="1"/>
</dbReference>
<protein>
    <recommendedName>
        <fullName evidence="1">Proteasome subunit beta 1</fullName>
        <ecNumber evidence="1">3.4.25.1</ecNumber>
    </recommendedName>
    <alternativeName>
        <fullName evidence="1">20S proteasome beta subunit 1</fullName>
    </alternativeName>
    <alternativeName>
        <fullName evidence="1">Proteasome core protein PsmB 1</fullName>
    </alternativeName>
</protein>
<name>PSB1_SACI7</name>
<gene>
    <name evidence="1" type="primary">psmB1</name>
    <name type="ordered locus">YG5714_1370</name>
</gene>
<keyword id="KW-0068">Autocatalytic cleavage</keyword>
<keyword id="KW-0963">Cytoplasm</keyword>
<keyword id="KW-0378">Hydrolase</keyword>
<keyword id="KW-0645">Protease</keyword>
<keyword id="KW-0647">Proteasome</keyword>
<keyword id="KW-0888">Threonine protease</keyword>
<keyword id="KW-0865">Zymogen</keyword>
<comment type="function">
    <text evidence="1">Component of the proteasome core, a large protease complex with broad specificity involved in protein degradation.</text>
</comment>
<comment type="catalytic activity">
    <reaction evidence="1">
        <text>Cleavage of peptide bonds with very broad specificity.</text>
        <dbReference type="EC" id="3.4.25.1"/>
    </reaction>
</comment>
<comment type="activity regulation">
    <text evidence="1">The formation of the proteasomal ATPase PAN-20S proteasome complex, via the docking of the C-termini of PAN into the intersubunit pockets in the alpha-rings, triggers opening of the gate for substrate entry. Interconversion between the open-gate and close-gate conformations leads to a dynamic regulation of the 20S proteasome proteolysis activity.</text>
</comment>
<comment type="subunit">
    <text evidence="1">The 20S proteasome core is composed of 14 alpha and 14 beta subunits that assemble into four stacked heptameric rings, resulting in a barrel-shaped structure. The two inner rings, each composed of seven catalytic beta subunits, are sandwiched by two outer rings, each composed of seven alpha subunits. The catalytic chamber with the active sites is on the inside of the barrel. Has a gated structure, the ends of the cylinder being occluded by the N-termini of the alpha-subunits. Is capped at one or both ends by the proteasome regulatory ATPase, PAN.</text>
</comment>
<comment type="subcellular location">
    <subcellularLocation>
        <location evidence="1">Cytoplasm</location>
    </subcellularLocation>
</comment>
<comment type="similarity">
    <text evidence="1">Belongs to the peptidase T1B family.</text>
</comment>
<sequence length="211" mass="23197">MVIMGNELQLENKILKGTTTVGIKVNDGVVLAADRRASAGFFVANKMVRKVLYITDKIGITTAGSVADLQFIYDVLKNIYHYNSITKYGPISIKGIATRLANVLSATKYFPYIVQILIGGYDDQPRLFNLDYLGDITEENYVATGSGSPVAMGVLEDEYNPKMTLDEAADLAKRAVFSAIKRDSFTGTGVIVAKIHSKGHEELEFYLNKKV</sequence>
<feature type="propeptide" id="PRO_0000397448" description="Removed in mature form; by autocatalysis" evidence="1">
    <location>
        <begin position="1"/>
        <end position="17"/>
    </location>
</feature>
<feature type="chain" id="PRO_0000397449" description="Proteasome subunit beta 1">
    <location>
        <begin position="18"/>
        <end position="211"/>
    </location>
</feature>
<feature type="active site" description="Nucleophile" evidence="1">
    <location>
        <position position="18"/>
    </location>
</feature>
<proteinExistence type="inferred from homology"/>
<organism>
    <name type="scientific">Saccharolobus islandicus (strain Y.G.57.14 / Yellowstone #1)</name>
    <name type="common">Sulfolobus islandicus</name>
    <dbReference type="NCBI Taxonomy" id="439386"/>
    <lineage>
        <taxon>Archaea</taxon>
        <taxon>Thermoproteota</taxon>
        <taxon>Thermoprotei</taxon>
        <taxon>Sulfolobales</taxon>
        <taxon>Sulfolobaceae</taxon>
        <taxon>Saccharolobus</taxon>
    </lineage>
</organism>